<reference key="1">
    <citation type="journal article" date="2000" name="Nature">
        <title>The genome sequence of the food-borne pathogen Campylobacter jejuni reveals hypervariable sequences.</title>
        <authorList>
            <person name="Parkhill J."/>
            <person name="Wren B.W."/>
            <person name="Mungall K.L."/>
            <person name="Ketley J.M."/>
            <person name="Churcher C.M."/>
            <person name="Basham D."/>
            <person name="Chillingworth T."/>
            <person name="Davies R.M."/>
            <person name="Feltwell T."/>
            <person name="Holroyd S."/>
            <person name="Jagels K."/>
            <person name="Karlyshev A.V."/>
            <person name="Moule S."/>
            <person name="Pallen M.J."/>
            <person name="Penn C.W."/>
            <person name="Quail M.A."/>
            <person name="Rajandream M.A."/>
            <person name="Rutherford K.M."/>
            <person name="van Vliet A.H.M."/>
            <person name="Whitehead S."/>
            <person name="Barrell B.G."/>
        </authorList>
    </citation>
    <scope>NUCLEOTIDE SEQUENCE [LARGE SCALE GENOMIC DNA]</scope>
    <source>
        <strain>ATCC 700819 / NCTC 11168</strain>
    </source>
</reference>
<evidence type="ECO:0000255" key="1">
    <source>
        <dbReference type="HAMAP-Rule" id="MF_00528"/>
    </source>
</evidence>
<dbReference type="EC" id="3.6.1.9" evidence="1"/>
<dbReference type="EMBL" id="AL111168">
    <property type="protein sequence ID" value="CAL34654.1"/>
    <property type="molecule type" value="Genomic_DNA"/>
</dbReference>
<dbReference type="PIR" id="D81396">
    <property type="entry name" value="D81396"/>
</dbReference>
<dbReference type="SMR" id="Q9PI04"/>
<dbReference type="IntAct" id="Q9PI04">
    <property type="interactions" value="48"/>
</dbReference>
<dbReference type="STRING" id="192222.Cj0507"/>
<dbReference type="PaxDb" id="192222-Cj0507"/>
<dbReference type="DNASU" id="904836"/>
<dbReference type="EnsemblBacteria" id="CAL34654">
    <property type="protein sequence ID" value="CAL34654"/>
    <property type="gene ID" value="Cj0507"/>
</dbReference>
<dbReference type="KEGG" id="cje:Cj0507"/>
<dbReference type="PATRIC" id="fig|192222.6.peg.500"/>
<dbReference type="eggNOG" id="COG0424">
    <property type="taxonomic scope" value="Bacteria"/>
</dbReference>
<dbReference type="HOGENOM" id="CLU_040416_2_2_7"/>
<dbReference type="OrthoDB" id="5339137at2"/>
<dbReference type="Proteomes" id="UP000000799">
    <property type="component" value="Chromosome"/>
</dbReference>
<dbReference type="GO" id="GO:0005737">
    <property type="term" value="C:cytoplasm"/>
    <property type="evidence" value="ECO:0007669"/>
    <property type="project" value="UniProtKB-SubCell"/>
</dbReference>
<dbReference type="GO" id="GO:0047429">
    <property type="term" value="F:nucleoside triphosphate diphosphatase activity"/>
    <property type="evidence" value="ECO:0007669"/>
    <property type="project" value="UniProtKB-EC"/>
</dbReference>
<dbReference type="GO" id="GO:0009117">
    <property type="term" value="P:nucleotide metabolic process"/>
    <property type="evidence" value="ECO:0007669"/>
    <property type="project" value="UniProtKB-KW"/>
</dbReference>
<dbReference type="CDD" id="cd00555">
    <property type="entry name" value="Maf"/>
    <property type="match status" value="1"/>
</dbReference>
<dbReference type="Gene3D" id="3.90.950.10">
    <property type="match status" value="1"/>
</dbReference>
<dbReference type="HAMAP" id="MF_00528">
    <property type="entry name" value="Maf"/>
    <property type="match status" value="1"/>
</dbReference>
<dbReference type="InterPro" id="IPR029001">
    <property type="entry name" value="ITPase-like_fam"/>
</dbReference>
<dbReference type="InterPro" id="IPR003697">
    <property type="entry name" value="Maf-like"/>
</dbReference>
<dbReference type="NCBIfam" id="TIGR00172">
    <property type="entry name" value="maf"/>
    <property type="match status" value="1"/>
</dbReference>
<dbReference type="NCBIfam" id="NF003141">
    <property type="entry name" value="PRK04056.1"/>
    <property type="match status" value="1"/>
</dbReference>
<dbReference type="PANTHER" id="PTHR43213">
    <property type="entry name" value="BIFUNCTIONAL DTTP/UTP PYROPHOSPHATASE/METHYLTRANSFERASE PROTEIN-RELATED"/>
    <property type="match status" value="1"/>
</dbReference>
<dbReference type="PANTHER" id="PTHR43213:SF5">
    <property type="entry name" value="BIFUNCTIONAL DTTP_UTP PYROPHOSPHATASE_METHYLTRANSFERASE PROTEIN-RELATED"/>
    <property type="match status" value="1"/>
</dbReference>
<dbReference type="Pfam" id="PF02545">
    <property type="entry name" value="Maf"/>
    <property type="match status" value="1"/>
</dbReference>
<dbReference type="PIRSF" id="PIRSF006305">
    <property type="entry name" value="Maf"/>
    <property type="match status" value="1"/>
</dbReference>
<dbReference type="SUPFAM" id="SSF52972">
    <property type="entry name" value="ITPase-like"/>
    <property type="match status" value="1"/>
</dbReference>
<sequence>MLILASSSISRANLLKTAKIDFRQVSFDYDENLNKNISPFLYVQKIVLEKERQFLSTLGKDFQNQNLLFADSIVCIDEKILTKAKDKKEAYEMLALQNGKYASILSAFLLVKPEKRVFSLSKTTLYFKNFDENALRDYVENDLYKGKAGCIMCEGFHQNFITQQVGNLSTALGLDIQTLKAYL</sequence>
<proteinExistence type="inferred from homology"/>
<comment type="function">
    <text evidence="1">Nucleoside triphosphate pyrophosphatase. May have a dual role in cell division arrest and in preventing the incorporation of modified nucleotides into cellular nucleic acids.</text>
</comment>
<comment type="catalytic activity">
    <reaction evidence="1">
        <text>a ribonucleoside 5'-triphosphate + H2O = a ribonucleoside 5'-phosphate + diphosphate + H(+)</text>
        <dbReference type="Rhea" id="RHEA:23996"/>
        <dbReference type="ChEBI" id="CHEBI:15377"/>
        <dbReference type="ChEBI" id="CHEBI:15378"/>
        <dbReference type="ChEBI" id="CHEBI:33019"/>
        <dbReference type="ChEBI" id="CHEBI:58043"/>
        <dbReference type="ChEBI" id="CHEBI:61557"/>
        <dbReference type="EC" id="3.6.1.9"/>
    </reaction>
</comment>
<comment type="catalytic activity">
    <reaction evidence="1">
        <text>a 2'-deoxyribonucleoside 5'-triphosphate + H2O = a 2'-deoxyribonucleoside 5'-phosphate + diphosphate + H(+)</text>
        <dbReference type="Rhea" id="RHEA:44644"/>
        <dbReference type="ChEBI" id="CHEBI:15377"/>
        <dbReference type="ChEBI" id="CHEBI:15378"/>
        <dbReference type="ChEBI" id="CHEBI:33019"/>
        <dbReference type="ChEBI" id="CHEBI:61560"/>
        <dbReference type="ChEBI" id="CHEBI:65317"/>
        <dbReference type="EC" id="3.6.1.9"/>
    </reaction>
</comment>
<comment type="cofactor">
    <cofactor evidence="1">
        <name>a divalent metal cation</name>
        <dbReference type="ChEBI" id="CHEBI:60240"/>
    </cofactor>
</comment>
<comment type="subcellular location">
    <subcellularLocation>
        <location evidence="1">Cytoplasm</location>
    </subcellularLocation>
</comment>
<comment type="similarity">
    <text evidence="1">Belongs to the Maf family.</text>
</comment>
<keyword id="KW-0963">Cytoplasm</keyword>
<keyword id="KW-0378">Hydrolase</keyword>
<keyword id="KW-0546">Nucleotide metabolism</keyword>
<keyword id="KW-1185">Reference proteome</keyword>
<feature type="chain" id="PRO_0000123004" description="Nucleoside triphosphate pyrophosphatase">
    <location>
        <begin position="1"/>
        <end position="183"/>
    </location>
</feature>
<feature type="active site" description="Proton acceptor" evidence="1">
    <location>
        <position position="71"/>
    </location>
</feature>
<accession>Q9PI04</accession>
<accession>Q0PB08</accession>
<protein>
    <recommendedName>
        <fullName evidence="1">Nucleoside triphosphate pyrophosphatase</fullName>
        <ecNumber evidence="1">3.6.1.9</ecNumber>
    </recommendedName>
    <alternativeName>
        <fullName evidence="1">Nucleotide pyrophosphatase</fullName>
        <shortName evidence="1">Nucleotide PPase</shortName>
    </alternativeName>
</protein>
<organism>
    <name type="scientific">Campylobacter jejuni subsp. jejuni serotype O:2 (strain ATCC 700819 / NCTC 11168)</name>
    <dbReference type="NCBI Taxonomy" id="192222"/>
    <lineage>
        <taxon>Bacteria</taxon>
        <taxon>Pseudomonadati</taxon>
        <taxon>Campylobacterota</taxon>
        <taxon>Epsilonproteobacteria</taxon>
        <taxon>Campylobacterales</taxon>
        <taxon>Campylobacteraceae</taxon>
        <taxon>Campylobacter</taxon>
    </lineage>
</organism>
<name>NTPP_CAMJE</name>
<gene>
    <name type="ordered locus">Cj0507</name>
</gene>